<name>PBURS_APIME</name>
<protein>
    <recommendedName>
        <fullName>Partner of bursicon</fullName>
    </recommendedName>
    <alternativeName>
        <fullName>Bursicon subunit beta</fullName>
    </alternativeName>
    <alternativeName>
        <fullName>Single-chain bursicon</fullName>
    </alternativeName>
</protein>
<sequence length="145" mass="16608">MKENFSIMFIHSIFLILIIFIYSNETIAQVTDDENCETLQSEVHITKDEYDEIGRLKRTCSGDISVTKCEGFCNSQVQPSVASTTGFSKECYCCRESYLKERHITLHHCYDADGIKLMNEENGVMEIKIREPVECKCIKCGDISQ</sequence>
<reference key="1">
    <citation type="journal article" date="2005" name="Proc. Natl. Acad. Sci. U.S.A.">
        <title>Bursicon, the insect cuticle-hardening hormone, is a heterodimeric cystine knot protein that activates G protein-coupled receptor LGR2.</title>
        <authorList>
            <person name="Luo C.-W."/>
            <person name="Dewey E.M."/>
            <person name="Sudo S."/>
            <person name="Ewer J."/>
            <person name="Hsu S.Y."/>
            <person name="Honegger H.-W."/>
            <person name="Hsueh A.J.W."/>
        </authorList>
    </citation>
    <scope>NUCLEOTIDE SEQUENCE [MRNA]</scope>
</reference>
<reference key="2">
    <citation type="journal article" date="2007" name="Gen. Comp. Endocrinol.">
        <title>Evolutionary conservation of bursicon in the animal kingdom.</title>
        <authorList>
            <person name="Van Loy T."/>
            <person name="Van Hiel M.B."/>
            <person name="Vandersmissen H.P."/>
            <person name="Poels J."/>
            <person name="Mendive F.M."/>
            <person name="Vassart G."/>
            <person name="Vanden Broeck J.J.M."/>
        </authorList>
    </citation>
    <scope>NUCLEOTIDE SEQUENCE [MRNA]</scope>
    <source>
        <tissue>Larva</tissue>
    </source>
</reference>
<reference key="3">
    <citation type="submission" date="2010-11" db="EMBL/GenBank/DDBJ databases">
        <authorList>
            <consortium name="Honey bee genome project"/>
            <person name="Zhang L."/>
            <person name="Deng J."/>
            <person name="Wu Y.-Q."/>
            <person name="Kovar C."/>
            <person name="Aqrawi P."/>
            <person name="Bandaranaike D."/>
            <person name="Blankenburg K."/>
            <person name="Chen D."/>
            <person name="Denson S."/>
            <person name="Dinh H."/>
            <person name="Firestine M."/>
            <person name="Gross S."/>
            <person name="Han Y."/>
            <person name="Hernandez B."/>
            <person name="Holder M."/>
            <person name="Jackson L."/>
            <person name="Javaid M."/>
            <person name="Jing C."/>
            <person name="Jones J."/>
            <person name="Joshi V."/>
            <person name="Kamau G."/>
            <person name="Korchina V."/>
            <person name="Lee S."/>
            <person name="Lorensuhewa L."/>
            <person name="Mata R."/>
            <person name="Mathew T."/>
            <person name="Mims S."/>
            <person name="Ngo R."/>
            <person name="Nguyen L."/>
            <person name="Okwuonu G."/>
            <person name="Ongeri F."/>
            <person name="Osuji N."/>
            <person name="Pham C."/>
            <person name="Puazo M."/>
            <person name="Qu C."/>
            <person name="Quiroz J."/>
            <person name="Raj R."/>
            <person name="Rio Deiros D."/>
            <person name="Santibanez J."/>
            <person name="Scheel M."/>
            <person name="Scherer S."/>
            <person name="Vee V."/>
            <person name="Wang M."/>
            <person name="Xin Y."/>
            <person name="Richards S."/>
            <person name="Reid J.G."/>
            <person name="Newsham I."/>
            <person name="Worley K.C."/>
            <person name="Muzny D.M."/>
            <person name="Gibbs R."/>
        </authorList>
    </citation>
    <scope>NUCLEOTIDE SEQUENCE [LARGE SCALE GENOMIC DNA]</scope>
    <source>
        <strain>DH4</strain>
    </source>
</reference>
<reference key="4">
    <citation type="journal article" date="2005" name="FEBS Lett.">
        <title>Drosophila molting neurohormone bursicon is a heterodimer and the natural agonist of the orphan receptor DLGR2.</title>
        <authorList>
            <person name="Mendive F.M."/>
            <person name="Van Loy T."/>
            <person name="Claeysen S."/>
            <person name="Poels J."/>
            <person name="Williamson M."/>
            <person name="Hauser F."/>
            <person name="Grimmelikhuijzen C.J.P."/>
            <person name="Vassart G."/>
            <person name="Vanden Broeck J.J.M."/>
        </authorList>
    </citation>
    <scope>IDENTIFICATION</scope>
    <scope>FUNCTION</scope>
</reference>
<gene>
    <name type="primary">pburs</name>
    <name type="synonym">sc-burs</name>
</gene>
<organism>
    <name type="scientific">Apis mellifera</name>
    <name type="common">Honeybee</name>
    <dbReference type="NCBI Taxonomy" id="7460"/>
    <lineage>
        <taxon>Eukaryota</taxon>
        <taxon>Metazoa</taxon>
        <taxon>Ecdysozoa</taxon>
        <taxon>Arthropoda</taxon>
        <taxon>Hexapoda</taxon>
        <taxon>Insecta</taxon>
        <taxon>Pterygota</taxon>
        <taxon>Neoptera</taxon>
        <taxon>Endopterygota</taxon>
        <taxon>Hymenoptera</taxon>
        <taxon>Apocrita</taxon>
        <taxon>Aculeata</taxon>
        <taxon>Apoidea</taxon>
        <taxon>Anthophila</taxon>
        <taxon>Apidae</taxon>
        <taxon>Apis</taxon>
    </lineage>
</organism>
<dbReference type="EMBL" id="AY823258">
    <property type="protein sequence ID" value="AAX18443.1"/>
    <property type="molecule type" value="mRNA"/>
</dbReference>
<dbReference type="EMBL" id="AM420632">
    <property type="protein sequence ID" value="CAM06632.1"/>
    <property type="molecule type" value="mRNA"/>
</dbReference>
<dbReference type="EMBL" id="AADG06006208">
    <property type="status" value="NOT_ANNOTATED_CDS"/>
    <property type="molecule type" value="Genomic_DNA"/>
</dbReference>
<dbReference type="EMBL" id="BN000692">
    <property type="protein sequence ID" value="CAH89263.2"/>
    <property type="status" value="ALT_SEQ"/>
    <property type="molecule type" value="mRNA"/>
</dbReference>
<dbReference type="RefSeq" id="NP_001035352.2">
    <property type="nucleotide sequence ID" value="NM_001040262.2"/>
</dbReference>
<dbReference type="SMR" id="A2VB90"/>
<dbReference type="FunCoup" id="A2VB90">
    <property type="interactions" value="1"/>
</dbReference>
<dbReference type="STRING" id="7460.A2VB90"/>
<dbReference type="PaxDb" id="7460-GB45445-PA"/>
<dbReference type="EnsemblMetazoa" id="NM_001040262">
    <property type="protein sequence ID" value="NP_001035352"/>
    <property type="gene ID" value="GeneID_413045"/>
</dbReference>
<dbReference type="GeneID" id="413045"/>
<dbReference type="KEGG" id="ame:413045"/>
<dbReference type="CTD" id="34845"/>
<dbReference type="eggNOG" id="ENOG502S111">
    <property type="taxonomic scope" value="Eukaryota"/>
</dbReference>
<dbReference type="HOGENOM" id="CLU_145016_0_0_1"/>
<dbReference type="InParanoid" id="A2VB90"/>
<dbReference type="OMA" id="ECKCYKC"/>
<dbReference type="OrthoDB" id="786951at2759"/>
<dbReference type="PhylomeDB" id="A2VB90"/>
<dbReference type="Proteomes" id="UP000005203">
    <property type="component" value="Linkage group LG6"/>
</dbReference>
<dbReference type="GO" id="GO:0031395">
    <property type="term" value="C:bursicon neuropeptide hormone complex"/>
    <property type="evidence" value="ECO:0007669"/>
    <property type="project" value="InterPro"/>
</dbReference>
<dbReference type="GO" id="GO:0001664">
    <property type="term" value="F:G protein-coupled receptor binding"/>
    <property type="evidence" value="ECO:0007669"/>
    <property type="project" value="InterPro"/>
</dbReference>
<dbReference type="GO" id="GO:0005184">
    <property type="term" value="F:neuropeptide hormone activity"/>
    <property type="evidence" value="ECO:0007669"/>
    <property type="project" value="InterPro"/>
</dbReference>
<dbReference type="GO" id="GO:0007186">
    <property type="term" value="P:G protein-coupled receptor signaling pathway"/>
    <property type="evidence" value="ECO:0007669"/>
    <property type="project" value="TreeGrafter"/>
</dbReference>
<dbReference type="Gene3D" id="2.10.90.10">
    <property type="entry name" value="Cystine-knot cytokines"/>
    <property type="match status" value="1"/>
</dbReference>
<dbReference type="InterPro" id="IPR034441">
    <property type="entry name" value="Bursicon_suB"/>
</dbReference>
<dbReference type="InterPro" id="IPR029034">
    <property type="entry name" value="Cystine-knot_cytokine"/>
</dbReference>
<dbReference type="PANTHER" id="PTHR41151">
    <property type="entry name" value="PARTNER OF BURSICON"/>
    <property type="match status" value="1"/>
</dbReference>
<dbReference type="PANTHER" id="PTHR41151:SF1">
    <property type="entry name" value="PARTNER OF BURSICON"/>
    <property type="match status" value="1"/>
</dbReference>
<keyword id="KW-1015">Disulfide bond</keyword>
<keyword id="KW-0372">Hormone</keyword>
<keyword id="KW-1185">Reference proteome</keyword>
<keyword id="KW-0964">Secreted</keyword>
<keyword id="KW-0732">Signal</keyword>
<accession>A2VB90</accession>
<accession>Q32TG6</accession>
<accession>Q566B0</accession>
<comment type="function">
    <text evidence="3">Final heterodimeric neurohormone released at the end of the molting cycle, involved in the sclerotization (tanning) of the insect cuticle, melanization and wing spreading.</text>
</comment>
<comment type="subunit">
    <text evidence="1">Heterodimer of burs and pburs.</text>
</comment>
<comment type="subcellular location">
    <subcellularLocation>
        <location evidence="1">Secreted</location>
    </subcellularLocation>
</comment>
<comment type="sequence caution" evidence="4">
    <conflict type="erroneous gene model prediction">
        <sequence resource="EMBL-CDS" id="CAH89263"/>
    </conflict>
</comment>
<feature type="signal peptide" evidence="2">
    <location>
        <begin position="1"/>
        <end position="28"/>
    </location>
</feature>
<feature type="chain" id="PRO_0000223892" description="Partner of bursicon">
    <location>
        <begin position="29"/>
        <end position="145"/>
    </location>
</feature>
<feature type="domain" description="CTCK">
    <location>
        <begin position="36"/>
        <end position="131"/>
    </location>
</feature>
<feature type="disulfide bond" evidence="1">
    <location>
        <begin position="36"/>
        <end position="94"/>
    </location>
</feature>
<feature type="disulfide bond" evidence="1">
    <location>
        <begin position="60"/>
        <end position="109"/>
    </location>
</feature>
<feature type="disulfide bond" evidence="1">
    <location>
        <begin position="69"/>
        <end position="135"/>
    </location>
</feature>
<feature type="disulfide bond" evidence="1">
    <location>
        <begin position="73"/>
        <end position="137"/>
    </location>
</feature>
<feature type="disulfide bond" evidence="1">
    <location>
        <begin position="91"/>
        <end position="140"/>
    </location>
</feature>
<feature type="disulfide bond" description="Interchain" evidence="1">
    <location>
        <position position="93"/>
    </location>
</feature>
<proteinExistence type="evidence at transcript level"/>
<evidence type="ECO:0000250" key="1"/>
<evidence type="ECO:0000255" key="2"/>
<evidence type="ECO:0000269" key="3">
    <source>
    </source>
</evidence>
<evidence type="ECO:0000305" key="4"/>